<gene>
    <name evidence="1" type="primary">mRRF2</name>
    <name evidence="1" type="synonym">EF-G2</name>
    <name type="ORF">AGAP007894</name>
</gene>
<proteinExistence type="inferred from homology"/>
<keyword id="KW-0342">GTP-binding</keyword>
<keyword id="KW-0496">Mitochondrion</keyword>
<keyword id="KW-0547">Nucleotide-binding</keyword>
<keyword id="KW-0648">Protein biosynthesis</keyword>
<keyword id="KW-1185">Reference proteome</keyword>
<keyword id="KW-0809">Transit peptide</keyword>
<protein>
    <recommendedName>
        <fullName evidence="2">Ribosome-releasing factor 2, mitochondrial</fullName>
        <shortName evidence="2">RRF2mt</shortName>
    </recommendedName>
    <alternativeName>
        <fullName evidence="2">Elongation factor G 2, mitochondrial</fullName>
        <shortName evidence="2">EF-G2mt</shortName>
        <shortName evidence="2">mEF-G 2</shortName>
    </alternativeName>
</protein>
<comment type="function">
    <text evidence="2">Mitochondrial GTPase that mediates the disassembly of ribosomes from messenger RNA at the termination of mitochondrial protein biosynthesis. Not involved in the GTP-dependent ribosomal translocation step during translation elongation.</text>
</comment>
<comment type="subcellular location">
    <subcellularLocation>
        <location evidence="2">Mitochondrion</location>
    </subcellularLocation>
</comment>
<comment type="similarity">
    <text evidence="2">Belongs to the TRAFAC class translation factor GTPase superfamily. Classic translation factor GTPase family. EF-G/EF-2 subfamily.</text>
</comment>
<feature type="transit peptide" description="Mitochondrion" evidence="2">
    <location>
        <begin position="1"/>
        <end position="36"/>
    </location>
</feature>
<feature type="chain" id="PRO_0000385596" description="Ribosome-releasing factor 2, mitochondrial">
    <location>
        <begin position="37"/>
        <end position="737"/>
    </location>
</feature>
<feature type="domain" description="tr-type G">
    <location>
        <begin position="39"/>
        <end position="318"/>
    </location>
</feature>
<feature type="binding site" evidence="2">
    <location>
        <begin position="48"/>
        <end position="55"/>
    </location>
    <ligand>
        <name>GTP</name>
        <dbReference type="ChEBI" id="CHEBI:37565"/>
    </ligand>
</feature>
<feature type="binding site" evidence="2">
    <location>
        <begin position="112"/>
        <end position="116"/>
    </location>
    <ligand>
        <name>GTP</name>
        <dbReference type="ChEBI" id="CHEBI:37565"/>
    </ligand>
</feature>
<feature type="binding site" evidence="2">
    <location>
        <begin position="166"/>
        <end position="169"/>
    </location>
    <ligand>
        <name>GTP</name>
        <dbReference type="ChEBI" id="CHEBI:37565"/>
    </ligand>
</feature>
<organism>
    <name type="scientific">Anopheles gambiae</name>
    <name type="common">African malaria mosquito</name>
    <dbReference type="NCBI Taxonomy" id="7165"/>
    <lineage>
        <taxon>Eukaryota</taxon>
        <taxon>Metazoa</taxon>
        <taxon>Ecdysozoa</taxon>
        <taxon>Arthropoda</taxon>
        <taxon>Hexapoda</taxon>
        <taxon>Insecta</taxon>
        <taxon>Pterygota</taxon>
        <taxon>Neoptera</taxon>
        <taxon>Endopterygota</taxon>
        <taxon>Diptera</taxon>
        <taxon>Nematocera</taxon>
        <taxon>Culicoidea</taxon>
        <taxon>Culicidae</taxon>
        <taxon>Anophelinae</taxon>
        <taxon>Anopheles</taxon>
    </lineage>
</organism>
<name>RRF2M_ANOGA</name>
<dbReference type="EMBL" id="AAAB01008964">
    <property type="protein sequence ID" value="EAA12772.4"/>
    <property type="molecule type" value="Genomic_DNA"/>
</dbReference>
<dbReference type="RefSeq" id="XP_317594.4">
    <property type="nucleotide sequence ID" value="XM_317594.4"/>
</dbReference>
<dbReference type="SMR" id="Q7Q3I6"/>
<dbReference type="FunCoup" id="Q7Q3I6">
    <property type="interactions" value="538"/>
</dbReference>
<dbReference type="STRING" id="7165.Q7Q3I6"/>
<dbReference type="PaxDb" id="7165-AGAP007894-PA"/>
<dbReference type="VEuPathDB" id="VectorBase:AGAMI1_001775"/>
<dbReference type="VEuPathDB" id="VectorBase:AGAP007894"/>
<dbReference type="eggNOG" id="KOG0464">
    <property type="taxonomic scope" value="Eukaryota"/>
</dbReference>
<dbReference type="HOGENOM" id="CLU_002794_4_1_1"/>
<dbReference type="InParanoid" id="Q7Q3I6"/>
<dbReference type="PhylomeDB" id="Q7Q3I6"/>
<dbReference type="Proteomes" id="UP000007062">
    <property type="component" value="Chromosome 3R"/>
</dbReference>
<dbReference type="GO" id="GO:0005739">
    <property type="term" value="C:mitochondrion"/>
    <property type="evidence" value="ECO:0007669"/>
    <property type="project" value="UniProtKB-SubCell"/>
</dbReference>
<dbReference type="GO" id="GO:0005525">
    <property type="term" value="F:GTP binding"/>
    <property type="evidence" value="ECO:0007669"/>
    <property type="project" value="UniProtKB-UniRule"/>
</dbReference>
<dbReference type="GO" id="GO:0003924">
    <property type="term" value="F:GTPase activity"/>
    <property type="evidence" value="ECO:0000250"/>
    <property type="project" value="UniProtKB"/>
</dbReference>
<dbReference type="GO" id="GO:0032543">
    <property type="term" value="P:mitochondrial translation"/>
    <property type="evidence" value="ECO:0000250"/>
    <property type="project" value="UniProtKB"/>
</dbReference>
<dbReference type="GO" id="GO:0032790">
    <property type="term" value="P:ribosome disassembly"/>
    <property type="evidence" value="ECO:0000250"/>
    <property type="project" value="UniProtKB"/>
</dbReference>
<dbReference type="CDD" id="cd16262">
    <property type="entry name" value="EFG_III"/>
    <property type="match status" value="1"/>
</dbReference>
<dbReference type="CDD" id="cd03713">
    <property type="entry name" value="EFG_mtEFG_C"/>
    <property type="match status" value="1"/>
</dbReference>
<dbReference type="CDD" id="cd01693">
    <property type="entry name" value="mtEFG2_like_IV"/>
    <property type="match status" value="1"/>
</dbReference>
<dbReference type="FunFam" id="3.30.70.240:FF:000001">
    <property type="entry name" value="Elongation factor G"/>
    <property type="match status" value="1"/>
</dbReference>
<dbReference type="FunFam" id="3.30.230.10:FF:000033">
    <property type="entry name" value="Ribosome-releasing factor 2, mitochondrial"/>
    <property type="match status" value="1"/>
</dbReference>
<dbReference type="FunFam" id="3.30.70.870:FF:000005">
    <property type="entry name" value="Ribosome-releasing factor 2, mitochondrial"/>
    <property type="match status" value="1"/>
</dbReference>
<dbReference type="FunFam" id="3.40.50.300:FF:000514">
    <property type="entry name" value="Ribosome-releasing factor 2, mitochondrial"/>
    <property type="match status" value="1"/>
</dbReference>
<dbReference type="Gene3D" id="3.30.230.10">
    <property type="match status" value="1"/>
</dbReference>
<dbReference type="Gene3D" id="3.30.70.240">
    <property type="match status" value="1"/>
</dbReference>
<dbReference type="Gene3D" id="3.30.70.870">
    <property type="entry name" value="Elongation Factor G (Translational Gtpase), domain 3"/>
    <property type="match status" value="1"/>
</dbReference>
<dbReference type="Gene3D" id="3.40.50.300">
    <property type="entry name" value="P-loop containing nucleotide triphosphate hydrolases"/>
    <property type="match status" value="1"/>
</dbReference>
<dbReference type="Gene3D" id="2.40.30.10">
    <property type="entry name" value="Translation factors"/>
    <property type="match status" value="1"/>
</dbReference>
<dbReference type="HAMAP" id="MF_03059">
    <property type="entry name" value="mEF_G_2"/>
    <property type="match status" value="1"/>
</dbReference>
<dbReference type="InterPro" id="IPR053905">
    <property type="entry name" value="EF-G-like_DII"/>
</dbReference>
<dbReference type="InterPro" id="IPR030851">
    <property type="entry name" value="EFG2"/>
</dbReference>
<dbReference type="InterPro" id="IPR041095">
    <property type="entry name" value="EFG_II"/>
</dbReference>
<dbReference type="InterPro" id="IPR009022">
    <property type="entry name" value="EFG_III"/>
</dbReference>
<dbReference type="InterPro" id="IPR035647">
    <property type="entry name" value="EFG_III/V"/>
</dbReference>
<dbReference type="InterPro" id="IPR035649">
    <property type="entry name" value="EFG_V"/>
</dbReference>
<dbReference type="InterPro" id="IPR000640">
    <property type="entry name" value="EFG_V-like"/>
</dbReference>
<dbReference type="InterPro" id="IPR031157">
    <property type="entry name" value="G_TR_CS"/>
</dbReference>
<dbReference type="InterPro" id="IPR027417">
    <property type="entry name" value="P-loop_NTPase"/>
</dbReference>
<dbReference type="InterPro" id="IPR020568">
    <property type="entry name" value="Ribosomal_Su5_D2-typ_SF"/>
</dbReference>
<dbReference type="InterPro" id="IPR014721">
    <property type="entry name" value="Ribsml_uS5_D2-typ_fold_subgr"/>
</dbReference>
<dbReference type="InterPro" id="IPR005225">
    <property type="entry name" value="Small_GTP-bd"/>
</dbReference>
<dbReference type="InterPro" id="IPR000795">
    <property type="entry name" value="T_Tr_GTP-bd_dom"/>
</dbReference>
<dbReference type="InterPro" id="IPR009000">
    <property type="entry name" value="Transl_B-barrel_sf"/>
</dbReference>
<dbReference type="InterPro" id="IPR005517">
    <property type="entry name" value="Transl_elong_EFG/EF2_IV"/>
</dbReference>
<dbReference type="NCBIfam" id="TIGR00231">
    <property type="entry name" value="small_GTP"/>
    <property type="match status" value="1"/>
</dbReference>
<dbReference type="PANTHER" id="PTHR43261:SF1">
    <property type="entry name" value="RIBOSOME-RELEASING FACTOR 2, MITOCHONDRIAL"/>
    <property type="match status" value="1"/>
</dbReference>
<dbReference type="PANTHER" id="PTHR43261">
    <property type="entry name" value="TRANSLATION ELONGATION FACTOR G-RELATED"/>
    <property type="match status" value="1"/>
</dbReference>
<dbReference type="Pfam" id="PF22042">
    <property type="entry name" value="EF-G_D2"/>
    <property type="match status" value="1"/>
</dbReference>
<dbReference type="Pfam" id="PF00679">
    <property type="entry name" value="EFG_C"/>
    <property type="match status" value="1"/>
</dbReference>
<dbReference type="Pfam" id="PF14492">
    <property type="entry name" value="EFG_III"/>
    <property type="match status" value="1"/>
</dbReference>
<dbReference type="Pfam" id="PF00009">
    <property type="entry name" value="GTP_EFTU"/>
    <property type="match status" value="1"/>
</dbReference>
<dbReference type="PRINTS" id="PR00315">
    <property type="entry name" value="ELONGATNFCT"/>
</dbReference>
<dbReference type="SMART" id="SM00838">
    <property type="entry name" value="EFG_C"/>
    <property type="match status" value="1"/>
</dbReference>
<dbReference type="SMART" id="SM00889">
    <property type="entry name" value="EFG_IV"/>
    <property type="match status" value="1"/>
</dbReference>
<dbReference type="SUPFAM" id="SSF54980">
    <property type="entry name" value="EF-G C-terminal domain-like"/>
    <property type="match status" value="2"/>
</dbReference>
<dbReference type="SUPFAM" id="SSF52540">
    <property type="entry name" value="P-loop containing nucleoside triphosphate hydrolases"/>
    <property type="match status" value="1"/>
</dbReference>
<dbReference type="SUPFAM" id="SSF54211">
    <property type="entry name" value="Ribosomal protein S5 domain 2-like"/>
    <property type="match status" value="1"/>
</dbReference>
<dbReference type="SUPFAM" id="SSF50447">
    <property type="entry name" value="Translation proteins"/>
    <property type="match status" value="1"/>
</dbReference>
<dbReference type="PROSITE" id="PS00301">
    <property type="entry name" value="G_TR_1"/>
    <property type="match status" value="1"/>
</dbReference>
<dbReference type="PROSITE" id="PS51722">
    <property type="entry name" value="G_TR_2"/>
    <property type="match status" value="1"/>
</dbReference>
<sequence length="737" mass="80995">MLCNRLHKAAFAARLRPRLPATVASCRQVHNSDGTISEKRIRNIGILAHIDAGKTTTTERMLYYSGRTDMLGEVKLGNTVTDFLQQERERGITICSAAVSFNWKEYRINLLDTPGHIDFTMEVEQSLGAVDGTVIILDGSAGVEAQTVTVWGQADRHRLPRLVFVNKMDKESADFDACLEDLEKKLSTVPVPLQMPIKEAGKLVGVIDVLSASQIIWDSKGKGRSYKAIPISDEQLHDQVQEKLYELIDLLSGMDDNLAQAIIEANSLENVKLNLVLDALRNCTLKQQIVPVLLGSSYKNVGVQLLMDSVLNFLPAPSERNQIYDLTNSQARIEGDFINVSTFRNDFVGKVFKVTHDKQRGPITMIRAFRGTVKKGSKFITATGGSETIQRIYEPLADEYREIESFGAGNIGLCAGPKSTVTGDLLLLASKLGLQTTIPDAVYFCSIEPPSSGQQSALDNALREIQREDPSLRVRYDEVTGQTVLGGMGQLHLEIVKSRILTEYRIDADLGPLQIAYKETLDEPCRGEWRAEKEIAGSKQSVYMDMTIHPSTASESNEERIVLDNSAEAQETLKLVRPRQMTFFRKGALAALQRGPKLGGQLANCTIKLHALTIGKGTADPFIMAASAQCIGNILANARCRLLEPDMFLEIVTPSEYLPPILADLSRRRARIEDVAPRGSANKVVTVIAPLAELGDYSTVLRTISSGTASVSMEPNGHSPLNESDEAQAMRRALGLE</sequence>
<evidence type="ECO:0000250" key="1">
    <source>
        <dbReference type="UniProtKB" id="Q9VCX4"/>
    </source>
</evidence>
<evidence type="ECO:0000255" key="2">
    <source>
        <dbReference type="HAMAP-Rule" id="MF_03059"/>
    </source>
</evidence>
<reference key="1">
    <citation type="journal article" date="2002" name="Science">
        <title>The genome sequence of the malaria mosquito Anopheles gambiae.</title>
        <authorList>
            <person name="Holt R.A."/>
            <person name="Subramanian G.M."/>
            <person name="Halpern A."/>
            <person name="Sutton G.G."/>
            <person name="Charlab R."/>
            <person name="Nusskern D.R."/>
            <person name="Wincker P."/>
            <person name="Clark A.G."/>
            <person name="Ribeiro J.M.C."/>
            <person name="Wides R."/>
            <person name="Salzberg S.L."/>
            <person name="Loftus B.J."/>
            <person name="Yandell M.D."/>
            <person name="Majoros W.H."/>
            <person name="Rusch D.B."/>
            <person name="Lai Z."/>
            <person name="Kraft C.L."/>
            <person name="Abril J.F."/>
            <person name="Anthouard V."/>
            <person name="Arensburger P."/>
            <person name="Atkinson P.W."/>
            <person name="Baden H."/>
            <person name="de Berardinis V."/>
            <person name="Baldwin D."/>
            <person name="Benes V."/>
            <person name="Biedler J."/>
            <person name="Blass C."/>
            <person name="Bolanos R."/>
            <person name="Boscus D."/>
            <person name="Barnstead M."/>
            <person name="Cai S."/>
            <person name="Center A."/>
            <person name="Chaturverdi K."/>
            <person name="Christophides G.K."/>
            <person name="Chrystal M.A.M."/>
            <person name="Clamp M."/>
            <person name="Cravchik A."/>
            <person name="Curwen V."/>
            <person name="Dana A."/>
            <person name="Delcher A."/>
            <person name="Dew I."/>
            <person name="Evans C.A."/>
            <person name="Flanigan M."/>
            <person name="Grundschober-Freimoser A."/>
            <person name="Friedli L."/>
            <person name="Gu Z."/>
            <person name="Guan P."/>
            <person name="Guigo R."/>
            <person name="Hillenmeyer M.E."/>
            <person name="Hladun S.L."/>
            <person name="Hogan J.R."/>
            <person name="Hong Y.S."/>
            <person name="Hoover J."/>
            <person name="Jaillon O."/>
            <person name="Ke Z."/>
            <person name="Kodira C.D."/>
            <person name="Kokoza E."/>
            <person name="Koutsos A."/>
            <person name="Letunic I."/>
            <person name="Levitsky A.A."/>
            <person name="Liang Y."/>
            <person name="Lin J.-J."/>
            <person name="Lobo N.F."/>
            <person name="Lopez J.R."/>
            <person name="Malek J.A."/>
            <person name="McIntosh T.C."/>
            <person name="Meister S."/>
            <person name="Miller J.R."/>
            <person name="Mobarry C."/>
            <person name="Mongin E."/>
            <person name="Murphy S.D."/>
            <person name="O'Brochta D.A."/>
            <person name="Pfannkoch C."/>
            <person name="Qi R."/>
            <person name="Regier M.A."/>
            <person name="Remington K."/>
            <person name="Shao H."/>
            <person name="Sharakhova M.V."/>
            <person name="Sitter C.D."/>
            <person name="Shetty J."/>
            <person name="Smith T.J."/>
            <person name="Strong R."/>
            <person name="Sun J."/>
            <person name="Thomasova D."/>
            <person name="Ton L.Q."/>
            <person name="Topalis P."/>
            <person name="Tu Z.J."/>
            <person name="Unger M.F."/>
            <person name="Walenz B."/>
            <person name="Wang A.H."/>
            <person name="Wang J."/>
            <person name="Wang M."/>
            <person name="Wang X."/>
            <person name="Woodford K.J."/>
            <person name="Wortman J.R."/>
            <person name="Wu M."/>
            <person name="Yao A."/>
            <person name="Zdobnov E.M."/>
            <person name="Zhang H."/>
            <person name="Zhao Q."/>
            <person name="Zhao S."/>
            <person name="Zhu S.C."/>
            <person name="Zhimulev I."/>
            <person name="Coluzzi M."/>
            <person name="della Torre A."/>
            <person name="Roth C.W."/>
            <person name="Louis C."/>
            <person name="Kalush F."/>
            <person name="Mural R.J."/>
            <person name="Myers E.W."/>
            <person name="Adams M.D."/>
            <person name="Smith H.O."/>
            <person name="Broder S."/>
            <person name="Gardner M.J."/>
            <person name="Fraser C.M."/>
            <person name="Birney E."/>
            <person name="Bork P."/>
            <person name="Brey P.T."/>
            <person name="Venter J.C."/>
            <person name="Weissenbach J."/>
            <person name="Kafatos F.C."/>
            <person name="Collins F.H."/>
            <person name="Hoffman S.L."/>
        </authorList>
    </citation>
    <scope>NUCLEOTIDE SEQUENCE [LARGE SCALE GENOMIC DNA]</scope>
    <source>
        <strain>PEST</strain>
    </source>
</reference>
<accession>Q7Q3I6</accession>